<proteinExistence type="inferred from homology"/>
<gene>
    <name evidence="1" type="primary">pheS</name>
    <name type="ordered locus">GFO_3424</name>
</gene>
<comment type="catalytic activity">
    <reaction evidence="1">
        <text>tRNA(Phe) + L-phenylalanine + ATP = L-phenylalanyl-tRNA(Phe) + AMP + diphosphate + H(+)</text>
        <dbReference type="Rhea" id="RHEA:19413"/>
        <dbReference type="Rhea" id="RHEA-COMP:9668"/>
        <dbReference type="Rhea" id="RHEA-COMP:9699"/>
        <dbReference type="ChEBI" id="CHEBI:15378"/>
        <dbReference type="ChEBI" id="CHEBI:30616"/>
        <dbReference type="ChEBI" id="CHEBI:33019"/>
        <dbReference type="ChEBI" id="CHEBI:58095"/>
        <dbReference type="ChEBI" id="CHEBI:78442"/>
        <dbReference type="ChEBI" id="CHEBI:78531"/>
        <dbReference type="ChEBI" id="CHEBI:456215"/>
        <dbReference type="EC" id="6.1.1.20"/>
    </reaction>
</comment>
<comment type="cofactor">
    <cofactor evidence="1">
        <name>Mg(2+)</name>
        <dbReference type="ChEBI" id="CHEBI:18420"/>
    </cofactor>
    <text evidence="1">Binds 2 magnesium ions per tetramer.</text>
</comment>
<comment type="subunit">
    <text evidence="1">Tetramer of two alpha and two beta subunits.</text>
</comment>
<comment type="subcellular location">
    <subcellularLocation>
        <location evidence="1">Cytoplasm</location>
    </subcellularLocation>
</comment>
<comment type="similarity">
    <text evidence="1">Belongs to the class-II aminoacyl-tRNA synthetase family. Phe-tRNA synthetase alpha subunit type 1 subfamily.</text>
</comment>
<keyword id="KW-0030">Aminoacyl-tRNA synthetase</keyword>
<keyword id="KW-0067">ATP-binding</keyword>
<keyword id="KW-0963">Cytoplasm</keyword>
<keyword id="KW-0436">Ligase</keyword>
<keyword id="KW-0460">Magnesium</keyword>
<keyword id="KW-0479">Metal-binding</keyword>
<keyword id="KW-0547">Nucleotide-binding</keyword>
<keyword id="KW-0648">Protein biosynthesis</keyword>
<reference key="1">
    <citation type="journal article" date="2006" name="Environ. Microbiol.">
        <title>Whole genome analysis of the marine Bacteroidetes'Gramella forsetii' reveals adaptations to degradation of polymeric organic matter.</title>
        <authorList>
            <person name="Bauer M."/>
            <person name="Kube M."/>
            <person name="Teeling H."/>
            <person name="Richter M."/>
            <person name="Lombardot T."/>
            <person name="Allers E."/>
            <person name="Wuerdemann C.A."/>
            <person name="Quast C."/>
            <person name="Kuhl H."/>
            <person name="Knaust F."/>
            <person name="Woebken D."/>
            <person name="Bischof K."/>
            <person name="Mussmann M."/>
            <person name="Choudhuri J.V."/>
            <person name="Meyer F."/>
            <person name="Reinhardt R."/>
            <person name="Amann R.I."/>
            <person name="Gloeckner F.O."/>
        </authorList>
    </citation>
    <scope>NUCLEOTIDE SEQUENCE [LARGE SCALE GENOMIC DNA]</scope>
    <source>
        <strain>DSM 17595 / CGMCC 1.15422 / KT0803</strain>
    </source>
</reference>
<evidence type="ECO:0000255" key="1">
    <source>
        <dbReference type="HAMAP-Rule" id="MF_00281"/>
    </source>
</evidence>
<feature type="chain" id="PRO_1000006837" description="Phenylalanine--tRNA ligase alpha subunit">
    <location>
        <begin position="1"/>
        <end position="339"/>
    </location>
</feature>
<feature type="binding site" evidence="1">
    <location>
        <position position="250"/>
    </location>
    <ligand>
        <name>Mg(2+)</name>
        <dbReference type="ChEBI" id="CHEBI:18420"/>
        <note>shared with beta subunit</note>
    </ligand>
</feature>
<accession>A0M6W9</accession>
<organism>
    <name type="scientific">Christiangramia forsetii (strain DSM 17595 / CGMCC 1.15422 / KT0803)</name>
    <name type="common">Gramella forsetii</name>
    <dbReference type="NCBI Taxonomy" id="411154"/>
    <lineage>
        <taxon>Bacteria</taxon>
        <taxon>Pseudomonadati</taxon>
        <taxon>Bacteroidota</taxon>
        <taxon>Flavobacteriia</taxon>
        <taxon>Flavobacteriales</taxon>
        <taxon>Flavobacteriaceae</taxon>
        <taxon>Christiangramia</taxon>
    </lineage>
</organism>
<dbReference type="EC" id="6.1.1.20" evidence="1"/>
<dbReference type="EMBL" id="CU207366">
    <property type="protein sequence ID" value="CAL68364.1"/>
    <property type="molecule type" value="Genomic_DNA"/>
</dbReference>
<dbReference type="RefSeq" id="WP_011711265.1">
    <property type="nucleotide sequence ID" value="NC_008571.1"/>
</dbReference>
<dbReference type="SMR" id="A0M6W9"/>
<dbReference type="STRING" id="411154.GFO_3424"/>
<dbReference type="KEGG" id="gfo:GFO_3424"/>
<dbReference type="eggNOG" id="COG0016">
    <property type="taxonomic scope" value="Bacteria"/>
</dbReference>
<dbReference type="HOGENOM" id="CLU_025086_0_1_10"/>
<dbReference type="OrthoDB" id="9800719at2"/>
<dbReference type="Proteomes" id="UP000000755">
    <property type="component" value="Chromosome"/>
</dbReference>
<dbReference type="GO" id="GO:0005737">
    <property type="term" value="C:cytoplasm"/>
    <property type="evidence" value="ECO:0007669"/>
    <property type="project" value="UniProtKB-SubCell"/>
</dbReference>
<dbReference type="GO" id="GO:0005524">
    <property type="term" value="F:ATP binding"/>
    <property type="evidence" value="ECO:0007669"/>
    <property type="project" value="UniProtKB-UniRule"/>
</dbReference>
<dbReference type="GO" id="GO:0000287">
    <property type="term" value="F:magnesium ion binding"/>
    <property type="evidence" value="ECO:0007669"/>
    <property type="project" value="UniProtKB-UniRule"/>
</dbReference>
<dbReference type="GO" id="GO:0004826">
    <property type="term" value="F:phenylalanine-tRNA ligase activity"/>
    <property type="evidence" value="ECO:0007669"/>
    <property type="project" value="UniProtKB-UniRule"/>
</dbReference>
<dbReference type="GO" id="GO:0000049">
    <property type="term" value="F:tRNA binding"/>
    <property type="evidence" value="ECO:0007669"/>
    <property type="project" value="InterPro"/>
</dbReference>
<dbReference type="GO" id="GO:0006432">
    <property type="term" value="P:phenylalanyl-tRNA aminoacylation"/>
    <property type="evidence" value="ECO:0007669"/>
    <property type="project" value="UniProtKB-UniRule"/>
</dbReference>
<dbReference type="CDD" id="cd00496">
    <property type="entry name" value="PheRS_alpha_core"/>
    <property type="match status" value="1"/>
</dbReference>
<dbReference type="Gene3D" id="3.30.930.10">
    <property type="entry name" value="Bira Bifunctional Protein, Domain 2"/>
    <property type="match status" value="1"/>
</dbReference>
<dbReference type="HAMAP" id="MF_00281">
    <property type="entry name" value="Phe_tRNA_synth_alpha1"/>
    <property type="match status" value="1"/>
</dbReference>
<dbReference type="InterPro" id="IPR006195">
    <property type="entry name" value="aa-tRNA-synth_II"/>
</dbReference>
<dbReference type="InterPro" id="IPR045864">
    <property type="entry name" value="aa-tRNA-synth_II/BPL/LPL"/>
</dbReference>
<dbReference type="InterPro" id="IPR004529">
    <property type="entry name" value="Phe-tRNA-synth_IIc_asu"/>
</dbReference>
<dbReference type="InterPro" id="IPR004188">
    <property type="entry name" value="Phe-tRNA_ligase_II_N"/>
</dbReference>
<dbReference type="InterPro" id="IPR022911">
    <property type="entry name" value="Phe_tRNA_ligase_alpha1_bac"/>
</dbReference>
<dbReference type="InterPro" id="IPR002319">
    <property type="entry name" value="Phenylalanyl-tRNA_Synthase"/>
</dbReference>
<dbReference type="InterPro" id="IPR010978">
    <property type="entry name" value="tRNA-bd_arm"/>
</dbReference>
<dbReference type="NCBIfam" id="TIGR00468">
    <property type="entry name" value="pheS"/>
    <property type="match status" value="1"/>
</dbReference>
<dbReference type="PANTHER" id="PTHR11538:SF41">
    <property type="entry name" value="PHENYLALANINE--TRNA LIGASE, MITOCHONDRIAL"/>
    <property type="match status" value="1"/>
</dbReference>
<dbReference type="PANTHER" id="PTHR11538">
    <property type="entry name" value="PHENYLALANYL-TRNA SYNTHETASE"/>
    <property type="match status" value="1"/>
</dbReference>
<dbReference type="Pfam" id="PF02912">
    <property type="entry name" value="Phe_tRNA-synt_N"/>
    <property type="match status" value="1"/>
</dbReference>
<dbReference type="Pfam" id="PF01409">
    <property type="entry name" value="tRNA-synt_2d"/>
    <property type="match status" value="1"/>
</dbReference>
<dbReference type="SUPFAM" id="SSF55681">
    <property type="entry name" value="Class II aaRS and biotin synthetases"/>
    <property type="match status" value="1"/>
</dbReference>
<dbReference type="SUPFAM" id="SSF46589">
    <property type="entry name" value="tRNA-binding arm"/>
    <property type="match status" value="1"/>
</dbReference>
<dbReference type="PROSITE" id="PS50862">
    <property type="entry name" value="AA_TRNA_LIGASE_II"/>
    <property type="match status" value="1"/>
</dbReference>
<sequence>MIDKIKGHIADVESFNAKTKDEIEAFRIKYLGKKGILNDFFAEFKNVPNEQKKEFGQVINELKTAAQVKVNALKEDLENNQEEKGVYGDLSRPAEPVEIGARHPISIVKNQITEIFSNIGFNVSEGPEMEDDWHNFTALNLPEYHPARDMQDTFFIQTDPDILLRTHTSSVQVRYMEENKPPIRTISPGRVFRNEAISARSHCIFHQVEGLYIDKDVSFADMKQTILYFTEQLFGKSKIRLRPSYFPFTEPSAEVDVYWGLETETDYRITKGTGWLEIMGCGMVDPNVLRNCNIDPKEYSGFAFGMGIERIAMLLYQIEDIRMFYENDLRFLEQFKSAL</sequence>
<protein>
    <recommendedName>
        <fullName evidence="1">Phenylalanine--tRNA ligase alpha subunit</fullName>
        <ecNumber evidence="1">6.1.1.20</ecNumber>
    </recommendedName>
    <alternativeName>
        <fullName evidence="1">Phenylalanyl-tRNA synthetase alpha subunit</fullName>
        <shortName evidence="1">PheRS</shortName>
    </alternativeName>
</protein>
<name>SYFA_CHRFK</name>